<organism>
    <name type="scientific">Desulfitobacterium hafniense (strain Y51)</name>
    <dbReference type="NCBI Taxonomy" id="138119"/>
    <lineage>
        <taxon>Bacteria</taxon>
        <taxon>Bacillati</taxon>
        <taxon>Bacillota</taxon>
        <taxon>Clostridia</taxon>
        <taxon>Eubacteriales</taxon>
        <taxon>Desulfitobacteriaceae</taxon>
        <taxon>Desulfitobacterium</taxon>
    </lineage>
</organism>
<accession>Q251G4</accession>
<proteinExistence type="inferred from homology"/>
<sequence length="420" mass="47048">MNILDDLKARGLVYQTTDEEALYKRLESPMTLYCGFDPTADSLHIGHLLPVLMLRRFQLAGHCPIALVGGGTGLIGDPSGKTSERTLNPTEVVQEWANRIKEQLSCFLDFEGVGNPAIMANNYEWLGTINVIEFLRDIGKNFSLGSMLAKESVESRMSRGISFTEFSYQILQSYDFLKLNELYGCEMQIGGSDQWGNITSGTDLIRRMSVGEDRQVHGLTVPLVTKSDGTKFGKTEGGAVWLDQDKTSPYKFYQFWINTDDRDVVKYLNFFTFLSIEEIQGLAQEVESQPEKRNAQRMLAKEVTELVHGVEARERAEKISQALFTGGIANLTAKEVEEGFSDVPSADVEDQEMLLVDALIKVGAVSSRRQARESMESGAVYVNGIRQTDTTLTVAQLDKIESRFIVIRRGKKNYYLVKLV</sequence>
<name>SYY_DESHY</name>
<comment type="function">
    <text evidence="1">Catalyzes the attachment of tyrosine to tRNA(Tyr) in a two-step reaction: tyrosine is first activated by ATP to form Tyr-AMP and then transferred to the acceptor end of tRNA(Tyr).</text>
</comment>
<comment type="catalytic activity">
    <reaction evidence="1">
        <text>tRNA(Tyr) + L-tyrosine + ATP = L-tyrosyl-tRNA(Tyr) + AMP + diphosphate + H(+)</text>
        <dbReference type="Rhea" id="RHEA:10220"/>
        <dbReference type="Rhea" id="RHEA-COMP:9706"/>
        <dbReference type="Rhea" id="RHEA-COMP:9707"/>
        <dbReference type="ChEBI" id="CHEBI:15378"/>
        <dbReference type="ChEBI" id="CHEBI:30616"/>
        <dbReference type="ChEBI" id="CHEBI:33019"/>
        <dbReference type="ChEBI" id="CHEBI:58315"/>
        <dbReference type="ChEBI" id="CHEBI:78442"/>
        <dbReference type="ChEBI" id="CHEBI:78536"/>
        <dbReference type="ChEBI" id="CHEBI:456215"/>
        <dbReference type="EC" id="6.1.1.1"/>
    </reaction>
</comment>
<comment type="subunit">
    <text evidence="1">Homodimer.</text>
</comment>
<comment type="subcellular location">
    <subcellularLocation>
        <location evidence="1">Cytoplasm</location>
    </subcellularLocation>
</comment>
<comment type="similarity">
    <text evidence="1">Belongs to the class-I aminoacyl-tRNA synthetase family. TyrS type 1 subfamily.</text>
</comment>
<dbReference type="EC" id="6.1.1.1" evidence="1"/>
<dbReference type="EMBL" id="AP008230">
    <property type="protein sequence ID" value="BAE82078.1"/>
    <property type="molecule type" value="Genomic_DNA"/>
</dbReference>
<dbReference type="RefSeq" id="WP_005808246.1">
    <property type="nucleotide sequence ID" value="NC_007907.1"/>
</dbReference>
<dbReference type="SMR" id="Q251G4"/>
<dbReference type="STRING" id="138119.DSY0289"/>
<dbReference type="KEGG" id="dsy:DSY0289"/>
<dbReference type="eggNOG" id="COG0162">
    <property type="taxonomic scope" value="Bacteria"/>
</dbReference>
<dbReference type="HOGENOM" id="CLU_024003_0_3_9"/>
<dbReference type="Proteomes" id="UP000001946">
    <property type="component" value="Chromosome"/>
</dbReference>
<dbReference type="GO" id="GO:0005829">
    <property type="term" value="C:cytosol"/>
    <property type="evidence" value="ECO:0007669"/>
    <property type="project" value="TreeGrafter"/>
</dbReference>
<dbReference type="GO" id="GO:0005524">
    <property type="term" value="F:ATP binding"/>
    <property type="evidence" value="ECO:0007669"/>
    <property type="project" value="UniProtKB-UniRule"/>
</dbReference>
<dbReference type="GO" id="GO:0003723">
    <property type="term" value="F:RNA binding"/>
    <property type="evidence" value="ECO:0007669"/>
    <property type="project" value="UniProtKB-KW"/>
</dbReference>
<dbReference type="GO" id="GO:0004831">
    <property type="term" value="F:tyrosine-tRNA ligase activity"/>
    <property type="evidence" value="ECO:0007669"/>
    <property type="project" value="UniProtKB-UniRule"/>
</dbReference>
<dbReference type="GO" id="GO:0006437">
    <property type="term" value="P:tyrosyl-tRNA aminoacylation"/>
    <property type="evidence" value="ECO:0007669"/>
    <property type="project" value="UniProtKB-UniRule"/>
</dbReference>
<dbReference type="CDD" id="cd00165">
    <property type="entry name" value="S4"/>
    <property type="match status" value="1"/>
</dbReference>
<dbReference type="CDD" id="cd00395">
    <property type="entry name" value="Tyr_Trp_RS_core"/>
    <property type="match status" value="1"/>
</dbReference>
<dbReference type="FunFam" id="1.10.240.10:FF:000001">
    <property type="entry name" value="Tyrosine--tRNA ligase"/>
    <property type="match status" value="1"/>
</dbReference>
<dbReference type="FunFam" id="3.40.50.620:FF:000008">
    <property type="entry name" value="Tyrosine--tRNA ligase"/>
    <property type="match status" value="1"/>
</dbReference>
<dbReference type="Gene3D" id="3.40.50.620">
    <property type="entry name" value="HUPs"/>
    <property type="match status" value="1"/>
</dbReference>
<dbReference type="Gene3D" id="3.10.290.10">
    <property type="entry name" value="RNA-binding S4 domain"/>
    <property type="match status" value="1"/>
</dbReference>
<dbReference type="Gene3D" id="1.10.240.10">
    <property type="entry name" value="Tyrosyl-Transfer RNA Synthetase"/>
    <property type="match status" value="1"/>
</dbReference>
<dbReference type="HAMAP" id="MF_02006">
    <property type="entry name" value="Tyr_tRNA_synth_type1"/>
    <property type="match status" value="1"/>
</dbReference>
<dbReference type="InterPro" id="IPR001412">
    <property type="entry name" value="aa-tRNA-synth_I_CS"/>
</dbReference>
<dbReference type="InterPro" id="IPR002305">
    <property type="entry name" value="aa-tRNA-synth_Ic"/>
</dbReference>
<dbReference type="InterPro" id="IPR014729">
    <property type="entry name" value="Rossmann-like_a/b/a_fold"/>
</dbReference>
<dbReference type="InterPro" id="IPR002942">
    <property type="entry name" value="S4_RNA-bd"/>
</dbReference>
<dbReference type="InterPro" id="IPR036986">
    <property type="entry name" value="S4_RNA-bd_sf"/>
</dbReference>
<dbReference type="InterPro" id="IPR054608">
    <property type="entry name" value="SYY-like_C"/>
</dbReference>
<dbReference type="InterPro" id="IPR002307">
    <property type="entry name" value="Tyr-tRNA-ligase"/>
</dbReference>
<dbReference type="InterPro" id="IPR024088">
    <property type="entry name" value="Tyr-tRNA-ligase_bac-type"/>
</dbReference>
<dbReference type="InterPro" id="IPR024107">
    <property type="entry name" value="Tyr-tRNA-ligase_bac_1"/>
</dbReference>
<dbReference type="NCBIfam" id="TIGR00234">
    <property type="entry name" value="tyrS"/>
    <property type="match status" value="1"/>
</dbReference>
<dbReference type="PANTHER" id="PTHR11766:SF0">
    <property type="entry name" value="TYROSINE--TRNA LIGASE, MITOCHONDRIAL"/>
    <property type="match status" value="1"/>
</dbReference>
<dbReference type="PANTHER" id="PTHR11766">
    <property type="entry name" value="TYROSYL-TRNA SYNTHETASE"/>
    <property type="match status" value="1"/>
</dbReference>
<dbReference type="Pfam" id="PF22421">
    <property type="entry name" value="SYY_C-terminal"/>
    <property type="match status" value="1"/>
</dbReference>
<dbReference type="Pfam" id="PF00579">
    <property type="entry name" value="tRNA-synt_1b"/>
    <property type="match status" value="1"/>
</dbReference>
<dbReference type="PRINTS" id="PR01040">
    <property type="entry name" value="TRNASYNTHTYR"/>
</dbReference>
<dbReference type="SMART" id="SM00363">
    <property type="entry name" value="S4"/>
    <property type="match status" value="1"/>
</dbReference>
<dbReference type="SUPFAM" id="SSF55174">
    <property type="entry name" value="Alpha-L RNA-binding motif"/>
    <property type="match status" value="1"/>
</dbReference>
<dbReference type="SUPFAM" id="SSF52374">
    <property type="entry name" value="Nucleotidylyl transferase"/>
    <property type="match status" value="1"/>
</dbReference>
<dbReference type="PROSITE" id="PS00178">
    <property type="entry name" value="AA_TRNA_LIGASE_I"/>
    <property type="match status" value="1"/>
</dbReference>
<dbReference type="PROSITE" id="PS50889">
    <property type="entry name" value="S4"/>
    <property type="match status" value="1"/>
</dbReference>
<keyword id="KW-0030">Aminoacyl-tRNA synthetase</keyword>
<keyword id="KW-0067">ATP-binding</keyword>
<keyword id="KW-0963">Cytoplasm</keyword>
<keyword id="KW-0436">Ligase</keyword>
<keyword id="KW-0547">Nucleotide-binding</keyword>
<keyword id="KW-0648">Protein biosynthesis</keyword>
<keyword id="KW-1185">Reference proteome</keyword>
<keyword id="KW-0694">RNA-binding</keyword>
<gene>
    <name evidence="1" type="primary">tyrS</name>
    <name type="ordered locus">DSY0289</name>
</gene>
<protein>
    <recommendedName>
        <fullName evidence="1">Tyrosine--tRNA ligase</fullName>
        <ecNumber evidence="1">6.1.1.1</ecNumber>
    </recommendedName>
    <alternativeName>
        <fullName evidence="1">Tyrosyl-tRNA synthetase</fullName>
        <shortName evidence="1">TyrRS</shortName>
    </alternativeName>
</protein>
<evidence type="ECO:0000255" key="1">
    <source>
        <dbReference type="HAMAP-Rule" id="MF_02006"/>
    </source>
</evidence>
<feature type="chain" id="PRO_1000216271" description="Tyrosine--tRNA ligase">
    <location>
        <begin position="1"/>
        <end position="420"/>
    </location>
</feature>
<feature type="domain" description="S4 RNA-binding" evidence="1">
    <location>
        <begin position="353"/>
        <end position="419"/>
    </location>
</feature>
<feature type="short sequence motif" description="'HIGH' region">
    <location>
        <begin position="38"/>
        <end position="47"/>
    </location>
</feature>
<feature type="short sequence motif" description="'KMSKS' region">
    <location>
        <begin position="231"/>
        <end position="235"/>
    </location>
</feature>
<feature type="binding site" evidence="1">
    <location>
        <position position="33"/>
    </location>
    <ligand>
        <name>L-tyrosine</name>
        <dbReference type="ChEBI" id="CHEBI:58315"/>
    </ligand>
</feature>
<feature type="binding site" evidence="1">
    <location>
        <position position="168"/>
    </location>
    <ligand>
        <name>L-tyrosine</name>
        <dbReference type="ChEBI" id="CHEBI:58315"/>
    </ligand>
</feature>
<feature type="binding site" evidence="1">
    <location>
        <position position="172"/>
    </location>
    <ligand>
        <name>L-tyrosine</name>
        <dbReference type="ChEBI" id="CHEBI:58315"/>
    </ligand>
</feature>
<feature type="binding site" evidence="1">
    <location>
        <position position="234"/>
    </location>
    <ligand>
        <name>ATP</name>
        <dbReference type="ChEBI" id="CHEBI:30616"/>
    </ligand>
</feature>
<reference key="1">
    <citation type="journal article" date="2006" name="J. Bacteriol.">
        <title>Complete genome sequence of the dehalorespiring bacterium Desulfitobacterium hafniense Y51 and comparison with Dehalococcoides ethenogenes 195.</title>
        <authorList>
            <person name="Nonaka H."/>
            <person name="Keresztes G."/>
            <person name="Shinoda Y."/>
            <person name="Ikenaga Y."/>
            <person name="Abe M."/>
            <person name="Naito K."/>
            <person name="Inatomi K."/>
            <person name="Furukawa K."/>
            <person name="Inui M."/>
            <person name="Yukawa H."/>
        </authorList>
    </citation>
    <scope>NUCLEOTIDE SEQUENCE [LARGE SCALE GENOMIC DNA]</scope>
    <source>
        <strain>Y51</strain>
    </source>
</reference>